<gene>
    <name evidence="1" type="primary">bioB</name>
    <name type="ordered locus">RHA1_ro01043</name>
</gene>
<reference key="1">
    <citation type="journal article" date="2006" name="Proc. Natl. Acad. Sci. U.S.A.">
        <title>The complete genome of Rhodococcus sp. RHA1 provides insights into a catabolic powerhouse.</title>
        <authorList>
            <person name="McLeod M.P."/>
            <person name="Warren R.L."/>
            <person name="Hsiao W.W.L."/>
            <person name="Araki N."/>
            <person name="Myhre M."/>
            <person name="Fernandes C."/>
            <person name="Miyazawa D."/>
            <person name="Wong W."/>
            <person name="Lillquist A.L."/>
            <person name="Wang D."/>
            <person name="Dosanjh M."/>
            <person name="Hara H."/>
            <person name="Petrescu A."/>
            <person name="Morin R.D."/>
            <person name="Yang G."/>
            <person name="Stott J.M."/>
            <person name="Schein J.E."/>
            <person name="Shin H."/>
            <person name="Smailus D."/>
            <person name="Siddiqui A.S."/>
            <person name="Marra M.A."/>
            <person name="Jones S.J.M."/>
            <person name="Holt R."/>
            <person name="Brinkman F.S.L."/>
            <person name="Miyauchi K."/>
            <person name="Fukuda M."/>
            <person name="Davies J.E."/>
            <person name="Mohn W.W."/>
            <person name="Eltis L.D."/>
        </authorList>
    </citation>
    <scope>NUCLEOTIDE SEQUENCE [LARGE SCALE GENOMIC DNA]</scope>
    <source>
        <strain>RHA1</strain>
    </source>
</reference>
<evidence type="ECO:0000255" key="1">
    <source>
        <dbReference type="HAMAP-Rule" id="MF_01694"/>
    </source>
</evidence>
<evidence type="ECO:0000255" key="2">
    <source>
        <dbReference type="PROSITE-ProRule" id="PRU01266"/>
    </source>
</evidence>
<evidence type="ECO:0000305" key="3"/>
<dbReference type="EC" id="2.8.1.6" evidence="1"/>
<dbReference type="EMBL" id="CP000431">
    <property type="protein sequence ID" value="ABG92870.1"/>
    <property type="status" value="ALT_INIT"/>
    <property type="molecule type" value="Genomic_DNA"/>
</dbReference>
<dbReference type="RefSeq" id="WP_005260291.1">
    <property type="nucleotide sequence ID" value="NC_008268.1"/>
</dbReference>
<dbReference type="SMR" id="Q0SHW6"/>
<dbReference type="KEGG" id="rha:RHA1_ro01043"/>
<dbReference type="eggNOG" id="COG0502">
    <property type="taxonomic scope" value="Bacteria"/>
</dbReference>
<dbReference type="HOGENOM" id="CLU_033172_2_1_11"/>
<dbReference type="OrthoDB" id="9786826at2"/>
<dbReference type="UniPathway" id="UPA00078">
    <property type="reaction ID" value="UER00162"/>
</dbReference>
<dbReference type="Proteomes" id="UP000008710">
    <property type="component" value="Chromosome"/>
</dbReference>
<dbReference type="GO" id="GO:0051537">
    <property type="term" value="F:2 iron, 2 sulfur cluster binding"/>
    <property type="evidence" value="ECO:0007669"/>
    <property type="project" value="UniProtKB-KW"/>
</dbReference>
<dbReference type="GO" id="GO:0051539">
    <property type="term" value="F:4 iron, 4 sulfur cluster binding"/>
    <property type="evidence" value="ECO:0007669"/>
    <property type="project" value="UniProtKB-KW"/>
</dbReference>
<dbReference type="GO" id="GO:0004076">
    <property type="term" value="F:biotin synthase activity"/>
    <property type="evidence" value="ECO:0007669"/>
    <property type="project" value="UniProtKB-UniRule"/>
</dbReference>
<dbReference type="GO" id="GO:0005506">
    <property type="term" value="F:iron ion binding"/>
    <property type="evidence" value="ECO:0007669"/>
    <property type="project" value="UniProtKB-UniRule"/>
</dbReference>
<dbReference type="GO" id="GO:0009102">
    <property type="term" value="P:biotin biosynthetic process"/>
    <property type="evidence" value="ECO:0007669"/>
    <property type="project" value="UniProtKB-UniRule"/>
</dbReference>
<dbReference type="CDD" id="cd01335">
    <property type="entry name" value="Radical_SAM"/>
    <property type="match status" value="1"/>
</dbReference>
<dbReference type="FunFam" id="3.20.20.70:FF:000026">
    <property type="entry name" value="Biotin synthase"/>
    <property type="match status" value="1"/>
</dbReference>
<dbReference type="Gene3D" id="3.20.20.70">
    <property type="entry name" value="Aldolase class I"/>
    <property type="match status" value="1"/>
</dbReference>
<dbReference type="HAMAP" id="MF_01694">
    <property type="entry name" value="BioB"/>
    <property type="match status" value="1"/>
</dbReference>
<dbReference type="InterPro" id="IPR013785">
    <property type="entry name" value="Aldolase_TIM"/>
</dbReference>
<dbReference type="InterPro" id="IPR010722">
    <property type="entry name" value="BATS_dom"/>
</dbReference>
<dbReference type="InterPro" id="IPR002684">
    <property type="entry name" value="Biotin_synth/BioAB"/>
</dbReference>
<dbReference type="InterPro" id="IPR024177">
    <property type="entry name" value="Biotin_synthase"/>
</dbReference>
<dbReference type="InterPro" id="IPR006638">
    <property type="entry name" value="Elp3/MiaA/NifB-like_rSAM"/>
</dbReference>
<dbReference type="InterPro" id="IPR007197">
    <property type="entry name" value="rSAM"/>
</dbReference>
<dbReference type="NCBIfam" id="TIGR00433">
    <property type="entry name" value="bioB"/>
    <property type="match status" value="1"/>
</dbReference>
<dbReference type="PANTHER" id="PTHR22976">
    <property type="entry name" value="BIOTIN SYNTHASE"/>
    <property type="match status" value="1"/>
</dbReference>
<dbReference type="PANTHER" id="PTHR22976:SF2">
    <property type="entry name" value="BIOTIN SYNTHASE, MITOCHONDRIAL"/>
    <property type="match status" value="1"/>
</dbReference>
<dbReference type="Pfam" id="PF06968">
    <property type="entry name" value="BATS"/>
    <property type="match status" value="1"/>
</dbReference>
<dbReference type="Pfam" id="PF04055">
    <property type="entry name" value="Radical_SAM"/>
    <property type="match status" value="1"/>
</dbReference>
<dbReference type="PIRSF" id="PIRSF001619">
    <property type="entry name" value="Biotin_synth"/>
    <property type="match status" value="1"/>
</dbReference>
<dbReference type="SFLD" id="SFLDG01278">
    <property type="entry name" value="biotin_synthase_like"/>
    <property type="match status" value="1"/>
</dbReference>
<dbReference type="SFLD" id="SFLDS00029">
    <property type="entry name" value="Radical_SAM"/>
    <property type="match status" value="1"/>
</dbReference>
<dbReference type="SMART" id="SM00876">
    <property type="entry name" value="BATS"/>
    <property type="match status" value="1"/>
</dbReference>
<dbReference type="SMART" id="SM00729">
    <property type="entry name" value="Elp3"/>
    <property type="match status" value="1"/>
</dbReference>
<dbReference type="SUPFAM" id="SSF102114">
    <property type="entry name" value="Radical SAM enzymes"/>
    <property type="match status" value="1"/>
</dbReference>
<dbReference type="PROSITE" id="PS51918">
    <property type="entry name" value="RADICAL_SAM"/>
    <property type="match status" value="1"/>
</dbReference>
<protein>
    <recommendedName>
        <fullName evidence="1">Biotin synthase</fullName>
        <ecNumber evidence="1">2.8.1.6</ecNumber>
    </recommendedName>
</protein>
<accession>Q0SHW6</accession>
<sequence length="337" mass="36524">MTSAPVQTDILALAREQVLERGDALNESQVLEVLQLPDDRLEELLALAHDVRMKWCGPEVEVEGIISLKTGGCPEDCHFCSQSGLFQSPVRAAWLDIPSLVEAAKQTAKSGASEFCIVAAVRGPDERLLAQVAAGIEAIRNEVDIQIACSLGMLTQEQVDQLAAMGVHRYNHNLETSKSHFPNVVTTHTWDERWNTLRMVREAGMEVCCGGILGMGESLEQRAEFAANLAELEPDEVPLNFLNPRPGTPFGDLEVLPASEALKSVAAFRLALPRTILRFAGGREITLGDLGAKQGILGGINAVIVGNYLTTLGRPAEQDLDLLVDLQMPIKALNDTL</sequence>
<feature type="chain" id="PRO_0000381589" description="Biotin synthase">
    <location>
        <begin position="1"/>
        <end position="337"/>
    </location>
</feature>
<feature type="domain" description="Radical SAM core" evidence="2">
    <location>
        <begin position="58"/>
        <end position="283"/>
    </location>
</feature>
<feature type="binding site" evidence="1">
    <location>
        <position position="73"/>
    </location>
    <ligand>
        <name>[4Fe-4S] cluster</name>
        <dbReference type="ChEBI" id="CHEBI:49883"/>
        <note>4Fe-4S-S-AdoMet</note>
    </ligand>
</feature>
<feature type="binding site" evidence="1">
    <location>
        <position position="77"/>
    </location>
    <ligand>
        <name>[4Fe-4S] cluster</name>
        <dbReference type="ChEBI" id="CHEBI:49883"/>
        <note>4Fe-4S-S-AdoMet</note>
    </ligand>
</feature>
<feature type="binding site" evidence="1">
    <location>
        <position position="80"/>
    </location>
    <ligand>
        <name>[4Fe-4S] cluster</name>
        <dbReference type="ChEBI" id="CHEBI:49883"/>
        <note>4Fe-4S-S-AdoMet</note>
    </ligand>
</feature>
<feature type="binding site" evidence="1">
    <location>
        <position position="116"/>
    </location>
    <ligand>
        <name>[2Fe-2S] cluster</name>
        <dbReference type="ChEBI" id="CHEBI:190135"/>
    </ligand>
</feature>
<feature type="binding site" evidence="1">
    <location>
        <position position="149"/>
    </location>
    <ligand>
        <name>[2Fe-2S] cluster</name>
        <dbReference type="ChEBI" id="CHEBI:190135"/>
    </ligand>
</feature>
<feature type="binding site" evidence="1">
    <location>
        <position position="208"/>
    </location>
    <ligand>
        <name>[2Fe-2S] cluster</name>
        <dbReference type="ChEBI" id="CHEBI:190135"/>
    </ligand>
</feature>
<feature type="binding site" evidence="1">
    <location>
        <position position="278"/>
    </location>
    <ligand>
        <name>[2Fe-2S] cluster</name>
        <dbReference type="ChEBI" id="CHEBI:190135"/>
    </ligand>
</feature>
<proteinExistence type="inferred from homology"/>
<name>BIOB_RHOJR</name>
<comment type="function">
    <text evidence="1">Catalyzes the conversion of dethiobiotin (DTB) to biotin by the insertion of a sulfur atom into dethiobiotin via a radical-based mechanism.</text>
</comment>
<comment type="catalytic activity">
    <reaction evidence="1">
        <text>(4R,5S)-dethiobiotin + (sulfur carrier)-SH + 2 reduced [2Fe-2S]-[ferredoxin] + 2 S-adenosyl-L-methionine = (sulfur carrier)-H + biotin + 2 5'-deoxyadenosine + 2 L-methionine + 2 oxidized [2Fe-2S]-[ferredoxin]</text>
        <dbReference type="Rhea" id="RHEA:22060"/>
        <dbReference type="Rhea" id="RHEA-COMP:10000"/>
        <dbReference type="Rhea" id="RHEA-COMP:10001"/>
        <dbReference type="Rhea" id="RHEA-COMP:14737"/>
        <dbReference type="Rhea" id="RHEA-COMP:14739"/>
        <dbReference type="ChEBI" id="CHEBI:17319"/>
        <dbReference type="ChEBI" id="CHEBI:29917"/>
        <dbReference type="ChEBI" id="CHEBI:33737"/>
        <dbReference type="ChEBI" id="CHEBI:33738"/>
        <dbReference type="ChEBI" id="CHEBI:57586"/>
        <dbReference type="ChEBI" id="CHEBI:57844"/>
        <dbReference type="ChEBI" id="CHEBI:59789"/>
        <dbReference type="ChEBI" id="CHEBI:64428"/>
        <dbReference type="ChEBI" id="CHEBI:149473"/>
        <dbReference type="EC" id="2.8.1.6"/>
    </reaction>
</comment>
<comment type="cofactor">
    <cofactor evidence="1">
        <name>[4Fe-4S] cluster</name>
        <dbReference type="ChEBI" id="CHEBI:49883"/>
    </cofactor>
    <text evidence="1">Binds 1 [4Fe-4S] cluster. The cluster is coordinated with 3 cysteines and an exchangeable S-adenosyl-L-methionine.</text>
</comment>
<comment type="cofactor">
    <cofactor evidence="1">
        <name>[2Fe-2S] cluster</name>
        <dbReference type="ChEBI" id="CHEBI:190135"/>
    </cofactor>
    <text evidence="1">Binds 1 [2Fe-2S] cluster. The cluster is coordinated with 3 cysteines and 1 arginine.</text>
</comment>
<comment type="pathway">
    <text evidence="1">Cofactor biosynthesis; biotin biosynthesis; biotin from 7,8-diaminononanoate: step 2/2.</text>
</comment>
<comment type="subunit">
    <text evidence="1">Homodimer.</text>
</comment>
<comment type="similarity">
    <text evidence="1">Belongs to the radical SAM superfamily. Biotin synthase family.</text>
</comment>
<comment type="sequence caution" evidence="3">
    <conflict type="erroneous initiation">
        <sequence resource="EMBL-CDS" id="ABG92870"/>
    </conflict>
</comment>
<organism>
    <name type="scientific">Rhodococcus jostii (strain RHA1)</name>
    <dbReference type="NCBI Taxonomy" id="101510"/>
    <lineage>
        <taxon>Bacteria</taxon>
        <taxon>Bacillati</taxon>
        <taxon>Actinomycetota</taxon>
        <taxon>Actinomycetes</taxon>
        <taxon>Mycobacteriales</taxon>
        <taxon>Nocardiaceae</taxon>
        <taxon>Rhodococcus</taxon>
    </lineage>
</organism>
<keyword id="KW-0001">2Fe-2S</keyword>
<keyword id="KW-0004">4Fe-4S</keyword>
<keyword id="KW-0093">Biotin biosynthesis</keyword>
<keyword id="KW-0408">Iron</keyword>
<keyword id="KW-0411">Iron-sulfur</keyword>
<keyword id="KW-0479">Metal-binding</keyword>
<keyword id="KW-0949">S-adenosyl-L-methionine</keyword>
<keyword id="KW-0808">Transferase</keyword>